<evidence type="ECO:0000269" key="1">
    <source>
    </source>
</evidence>
<dbReference type="EMBL" id="L22858">
    <property type="protein sequence ID" value="AAA66772.1"/>
    <property type="molecule type" value="Genomic_DNA"/>
</dbReference>
<dbReference type="PIR" id="H72867">
    <property type="entry name" value="H72867"/>
</dbReference>
<dbReference type="PDB" id="8I8B">
    <property type="method" value="EM"/>
    <property type="resolution" value="4.31 A"/>
    <property type="chains" value="E=1-477"/>
</dbReference>
<dbReference type="PDB" id="8VWI">
    <property type="method" value="EM"/>
    <property type="resolution" value="4.71 A"/>
    <property type="chains" value="O/j=1-477"/>
</dbReference>
<dbReference type="PDB" id="8VWJ">
    <property type="method" value="EM"/>
    <property type="resolution" value="4.78 A"/>
    <property type="chains" value="O/j=1-477"/>
</dbReference>
<dbReference type="PDBsum" id="8I8B"/>
<dbReference type="PDBsum" id="8VWI"/>
<dbReference type="PDBsum" id="8VWJ"/>
<dbReference type="EMDB" id="EMD-43588"/>
<dbReference type="EMDB" id="EMD-43589"/>
<dbReference type="SMR" id="P41700"/>
<dbReference type="KEGG" id="vg:1403975"/>
<dbReference type="OrthoDB" id="4896at10239"/>
<dbReference type="Proteomes" id="UP000008292">
    <property type="component" value="Segment"/>
</dbReference>
<dbReference type="GO" id="GO:0030430">
    <property type="term" value="C:host cell cytoplasm"/>
    <property type="evidence" value="ECO:0000314"/>
    <property type="project" value="UniProtKB"/>
</dbReference>
<dbReference type="GO" id="GO:0042025">
    <property type="term" value="C:host cell nucleus"/>
    <property type="evidence" value="ECO:0000314"/>
    <property type="project" value="UniProtKB"/>
</dbReference>
<dbReference type="GO" id="GO:0019013">
    <property type="term" value="C:viral nucleocapsid"/>
    <property type="evidence" value="ECO:0000314"/>
    <property type="project" value="UniProtKB"/>
</dbReference>
<dbReference type="InterPro" id="IPR006997">
    <property type="entry name" value="Baculo_Y142"/>
</dbReference>
<dbReference type="Pfam" id="PF04913">
    <property type="entry name" value="Baculo_Y142"/>
    <property type="match status" value="1"/>
</dbReference>
<proteinExistence type="evidence at protein level"/>
<feature type="chain" id="PRO_0000133067" description="Protein AC142">
    <location>
        <begin position="1"/>
        <end position="477"/>
    </location>
</feature>
<accession>P41700</accession>
<gene>
    <name type="primary">ORF142</name>
</gene>
<comment type="function">
    <text evidence="1">Required for occlusion-derived virus (ODV) envelopment and subsequent embedding of virions into polyhedra.</text>
</comment>
<comment type="subcellular location">
    <subcellularLocation>
        <location evidence="1">Host cytoplasm</location>
    </subcellularLocation>
    <subcellularLocation>
        <location evidence="1">Host nucleus</location>
    </subcellularLocation>
    <subcellularLocation>
        <location evidence="1">Virion</location>
    </subcellularLocation>
    <text evidence="1">Within virion, localizes primarily to the nucleocapsid fraction.</text>
</comment>
<keyword id="KW-0002">3D-structure</keyword>
<keyword id="KW-1035">Host cytoplasm</keyword>
<keyword id="KW-1048">Host nucleus</keyword>
<keyword id="KW-1185">Reference proteome</keyword>
<keyword id="KW-0946">Virion</keyword>
<sequence>MSGGGNLLTLERDHFKYLFLTSYFDLKDNEHVPSEPMAFIRNYLNCTFDLLDDAVLMNYFNYLQSMQLKHLVGSTSTNIFKFVKPQFRFVCDRTTVDILEFDTRMYIKPGTPVYATNLFTSNPRKMMAFLYAEFGKVFKNKIFVNINNYGCVLAGSAGFLFDDAYVDWNGVRMCAAPRLDNNMHPFRLYLLGEDMAKHFVDNNILPPHPSNAKTRKINNSMFMLKNFYKGLPLFKSKYTVVNSTKIVTRKPNDIFNEIDKELNGNCPFIKFIQRDYIFDAQFPPDLLDLLNEYMTKSSIMKIITKFVIEENPAMSGEMSREIILDRYSVDNYRKLYIKMEITNQFPVMYDHESSYIFVSKDFLQLKGTMNAFYAPKQRILSILAVNRLFGATETIDFHPNLLVYRQSSPPVRLTGDVYVVDKNEKVFLVKHVFSNTVPAYLLIRGDYESSSDLKSLRDLNPWVQNTLLKLLIPDSVQ</sequence>
<name>AC142_NPVAC</name>
<organism>
    <name type="scientific">Autographa californica nuclear polyhedrosis virus</name>
    <name type="common">AcMNPV</name>
    <dbReference type="NCBI Taxonomy" id="46015"/>
    <lineage>
        <taxon>Viruses</taxon>
        <taxon>Viruses incertae sedis</taxon>
        <taxon>Naldaviricetes</taxon>
        <taxon>Lefavirales</taxon>
        <taxon>Baculoviridae</taxon>
        <taxon>Alphabaculovirus</taxon>
        <taxon>Alphabaculovirus aucalifornicae</taxon>
    </lineage>
</organism>
<reference key="1">
    <citation type="journal article" date="1994" name="Virology">
        <title>The complete DNA sequence of Autographa californica nuclear polyhedrosis virus.</title>
        <authorList>
            <person name="Ayres M.D."/>
            <person name="Howard S.C."/>
            <person name="Kuzio J."/>
            <person name="Lopez-Ferber M."/>
            <person name="Possee R.D."/>
        </authorList>
    </citation>
    <scope>NUCLEOTIDE SEQUENCE [LARGE SCALE GENOMIC DNA]</scope>
    <source>
        <strain>C6</strain>
    </source>
</reference>
<reference key="2">
    <citation type="journal article" date="2008" name="Virology">
        <title>Autographa californica multiple nucleopolyhedrovirus ac142, a core gene that is essential for BV production and ODV envelopment.</title>
        <authorList>
            <person name="McCarthy C.B."/>
            <person name="Dai X."/>
            <person name="Donly C."/>
            <person name="Theilmann D.A."/>
        </authorList>
    </citation>
    <scope>FUNCTION</scope>
    <scope>SUBCELLULAR LOCATION</scope>
</reference>
<protein>
    <recommendedName>
        <fullName>Protein AC142</fullName>
    </recommendedName>
</protein>
<organismHost>
    <name type="scientific">Lepidoptera</name>
    <name type="common">butterflies and moths</name>
    <dbReference type="NCBI Taxonomy" id="7088"/>
</organismHost>